<keyword id="KW-0131">Cell cycle</keyword>
<keyword id="KW-0132">Cell division</keyword>
<keyword id="KW-0342">GTP-binding</keyword>
<keyword id="KW-0460">Magnesium</keyword>
<keyword id="KW-0479">Metal-binding</keyword>
<keyword id="KW-0547">Nucleotide-binding</keyword>
<keyword id="KW-1185">Reference proteome</keyword>
<keyword id="KW-0717">Septation</keyword>
<organism>
    <name type="scientific">Psychromonas ingrahamii (strain DSM 17664 / CCUG 51855 / 37)</name>
    <dbReference type="NCBI Taxonomy" id="357804"/>
    <lineage>
        <taxon>Bacteria</taxon>
        <taxon>Pseudomonadati</taxon>
        <taxon>Pseudomonadota</taxon>
        <taxon>Gammaproteobacteria</taxon>
        <taxon>Alteromonadales</taxon>
        <taxon>Psychromonadaceae</taxon>
        <taxon>Psychromonas</taxon>
    </lineage>
</organism>
<accession>A1SRG3</accession>
<comment type="function">
    <text evidence="1">Necessary for normal cell division and for the maintenance of normal septation.</text>
</comment>
<comment type="cofactor">
    <cofactor evidence="1">
        <name>Mg(2+)</name>
        <dbReference type="ChEBI" id="CHEBI:18420"/>
    </cofactor>
</comment>
<comment type="similarity">
    <text evidence="1">Belongs to the TRAFAC class TrmE-Era-EngA-EngB-Septin-like GTPase superfamily. EngB GTPase family.</text>
</comment>
<evidence type="ECO:0000255" key="1">
    <source>
        <dbReference type="HAMAP-Rule" id="MF_00321"/>
    </source>
</evidence>
<name>ENGB_PSYIN</name>
<reference key="1">
    <citation type="journal article" date="2008" name="BMC Genomics">
        <title>Genomics of an extreme psychrophile, Psychromonas ingrahamii.</title>
        <authorList>
            <person name="Riley M."/>
            <person name="Staley J.T."/>
            <person name="Danchin A."/>
            <person name="Wang T.Z."/>
            <person name="Brettin T.S."/>
            <person name="Hauser L.J."/>
            <person name="Land M.L."/>
            <person name="Thompson L.S."/>
        </authorList>
    </citation>
    <scope>NUCLEOTIDE SEQUENCE [LARGE SCALE GENOMIC DNA]</scope>
    <source>
        <strain>DSM 17664 / CCUG 51855 / 37</strain>
    </source>
</reference>
<sequence length="218" mass="24619">MEFQKIHFQKAHFLISAPDIRHLDKHLPPESGIEIAFAGRSNAGKSSALNRLTRQKGLARTSKTPGRTQLINVFEIEEGKRLIDLPGYGFAKVPLAMKLKWQKSLGEYLQERESLKGLVVLMDIRQPFKELDQQLIYWAIDADIPVLALLTKADKLKQGARKTTLLKMREEAKNFEGDVQVELFSSLKGIGLEMLEQKVTSWYAQGETPSTALDEISI</sequence>
<protein>
    <recommendedName>
        <fullName evidence="1">Probable GTP-binding protein EngB</fullName>
    </recommendedName>
</protein>
<dbReference type="EMBL" id="CP000510">
    <property type="protein sequence ID" value="ABM02078.1"/>
    <property type="molecule type" value="Genomic_DNA"/>
</dbReference>
<dbReference type="RefSeq" id="WP_011768637.1">
    <property type="nucleotide sequence ID" value="NC_008709.1"/>
</dbReference>
<dbReference type="SMR" id="A1SRG3"/>
<dbReference type="STRING" id="357804.Ping_0211"/>
<dbReference type="KEGG" id="pin:Ping_0211"/>
<dbReference type="eggNOG" id="COG0218">
    <property type="taxonomic scope" value="Bacteria"/>
</dbReference>
<dbReference type="HOGENOM" id="CLU_033732_1_0_6"/>
<dbReference type="OrthoDB" id="9804921at2"/>
<dbReference type="Proteomes" id="UP000000639">
    <property type="component" value="Chromosome"/>
</dbReference>
<dbReference type="GO" id="GO:0005829">
    <property type="term" value="C:cytosol"/>
    <property type="evidence" value="ECO:0007669"/>
    <property type="project" value="TreeGrafter"/>
</dbReference>
<dbReference type="GO" id="GO:0005525">
    <property type="term" value="F:GTP binding"/>
    <property type="evidence" value="ECO:0007669"/>
    <property type="project" value="UniProtKB-UniRule"/>
</dbReference>
<dbReference type="GO" id="GO:0046872">
    <property type="term" value="F:metal ion binding"/>
    <property type="evidence" value="ECO:0007669"/>
    <property type="project" value="UniProtKB-KW"/>
</dbReference>
<dbReference type="GO" id="GO:0000917">
    <property type="term" value="P:division septum assembly"/>
    <property type="evidence" value="ECO:0007669"/>
    <property type="project" value="UniProtKB-KW"/>
</dbReference>
<dbReference type="CDD" id="cd01876">
    <property type="entry name" value="YihA_EngB"/>
    <property type="match status" value="1"/>
</dbReference>
<dbReference type="FunFam" id="3.40.50.300:FF:000098">
    <property type="entry name" value="Probable GTP-binding protein EngB"/>
    <property type="match status" value="1"/>
</dbReference>
<dbReference type="Gene3D" id="3.40.50.300">
    <property type="entry name" value="P-loop containing nucleotide triphosphate hydrolases"/>
    <property type="match status" value="1"/>
</dbReference>
<dbReference type="HAMAP" id="MF_00321">
    <property type="entry name" value="GTPase_EngB"/>
    <property type="match status" value="1"/>
</dbReference>
<dbReference type="InterPro" id="IPR030393">
    <property type="entry name" value="G_ENGB_dom"/>
</dbReference>
<dbReference type="InterPro" id="IPR006073">
    <property type="entry name" value="GTP-bd"/>
</dbReference>
<dbReference type="InterPro" id="IPR019987">
    <property type="entry name" value="GTP-bd_ribosome_bio_YsxC"/>
</dbReference>
<dbReference type="InterPro" id="IPR027417">
    <property type="entry name" value="P-loop_NTPase"/>
</dbReference>
<dbReference type="NCBIfam" id="TIGR03598">
    <property type="entry name" value="GTPase_YsxC"/>
    <property type="match status" value="1"/>
</dbReference>
<dbReference type="PANTHER" id="PTHR11649:SF13">
    <property type="entry name" value="ENGB-TYPE G DOMAIN-CONTAINING PROTEIN"/>
    <property type="match status" value="1"/>
</dbReference>
<dbReference type="PANTHER" id="PTHR11649">
    <property type="entry name" value="MSS1/TRME-RELATED GTP-BINDING PROTEIN"/>
    <property type="match status" value="1"/>
</dbReference>
<dbReference type="Pfam" id="PF01926">
    <property type="entry name" value="MMR_HSR1"/>
    <property type="match status" value="1"/>
</dbReference>
<dbReference type="SUPFAM" id="SSF52540">
    <property type="entry name" value="P-loop containing nucleoside triphosphate hydrolases"/>
    <property type="match status" value="1"/>
</dbReference>
<dbReference type="PROSITE" id="PS51706">
    <property type="entry name" value="G_ENGB"/>
    <property type="match status" value="1"/>
</dbReference>
<proteinExistence type="inferred from homology"/>
<gene>
    <name evidence="1" type="primary">engB</name>
    <name type="ordered locus">Ping_0211</name>
</gene>
<feature type="chain" id="PRO_1000005844" description="Probable GTP-binding protein EngB">
    <location>
        <begin position="1"/>
        <end position="218"/>
    </location>
</feature>
<feature type="domain" description="EngB-type G" evidence="1">
    <location>
        <begin position="31"/>
        <end position="205"/>
    </location>
</feature>
<feature type="binding site" evidence="1">
    <location>
        <begin position="39"/>
        <end position="46"/>
    </location>
    <ligand>
        <name>GTP</name>
        <dbReference type="ChEBI" id="CHEBI:37565"/>
    </ligand>
</feature>
<feature type="binding site" evidence="1">
    <location>
        <position position="46"/>
    </location>
    <ligand>
        <name>Mg(2+)</name>
        <dbReference type="ChEBI" id="CHEBI:18420"/>
    </ligand>
</feature>
<feature type="binding site" evidence="1">
    <location>
        <begin position="66"/>
        <end position="70"/>
    </location>
    <ligand>
        <name>GTP</name>
        <dbReference type="ChEBI" id="CHEBI:37565"/>
    </ligand>
</feature>
<feature type="binding site" evidence="1">
    <location>
        <position position="68"/>
    </location>
    <ligand>
        <name>Mg(2+)</name>
        <dbReference type="ChEBI" id="CHEBI:18420"/>
    </ligand>
</feature>
<feature type="binding site" evidence="1">
    <location>
        <begin position="84"/>
        <end position="87"/>
    </location>
    <ligand>
        <name>GTP</name>
        <dbReference type="ChEBI" id="CHEBI:37565"/>
    </ligand>
</feature>
<feature type="binding site" evidence="1">
    <location>
        <begin position="151"/>
        <end position="154"/>
    </location>
    <ligand>
        <name>GTP</name>
        <dbReference type="ChEBI" id="CHEBI:37565"/>
    </ligand>
</feature>
<feature type="binding site" evidence="1">
    <location>
        <begin position="184"/>
        <end position="186"/>
    </location>
    <ligand>
        <name>GTP</name>
        <dbReference type="ChEBI" id="CHEBI:37565"/>
    </ligand>
</feature>